<accession>Q5N2C7</accession>
<name>MRAY_SYNP6</name>
<feature type="chain" id="PRO_0000108914" description="Phospho-N-acetylmuramoyl-pentapeptide-transferase">
    <location>
        <begin position="1"/>
        <end position="368"/>
    </location>
</feature>
<feature type="transmembrane region" description="Helical" evidence="1">
    <location>
        <begin position="50"/>
        <end position="70"/>
    </location>
</feature>
<feature type="transmembrane region" description="Helical" evidence="1">
    <location>
        <begin position="95"/>
        <end position="115"/>
    </location>
</feature>
<feature type="transmembrane region" description="Helical" evidence="1">
    <location>
        <begin position="117"/>
        <end position="137"/>
    </location>
</feature>
<feature type="transmembrane region" description="Helical" evidence="1">
    <location>
        <begin position="156"/>
        <end position="176"/>
    </location>
</feature>
<feature type="transmembrane region" description="Helical" evidence="1">
    <location>
        <begin position="183"/>
        <end position="203"/>
    </location>
</feature>
<feature type="transmembrane region" description="Helical" evidence="1">
    <location>
        <begin position="218"/>
        <end position="238"/>
    </location>
</feature>
<feature type="transmembrane region" description="Helical" evidence="1">
    <location>
        <begin position="242"/>
        <end position="262"/>
    </location>
</feature>
<feature type="transmembrane region" description="Helical" evidence="1">
    <location>
        <begin position="284"/>
        <end position="304"/>
    </location>
</feature>
<feature type="transmembrane region" description="Helical" evidence="1">
    <location>
        <begin position="347"/>
        <end position="367"/>
    </location>
</feature>
<evidence type="ECO:0000255" key="1">
    <source>
        <dbReference type="HAMAP-Rule" id="MF_00038"/>
    </source>
</evidence>
<comment type="function">
    <text evidence="1">Catalyzes the initial step of the lipid cycle reactions in the biosynthesis of the cell wall peptidoglycan: transfers peptidoglycan precursor phospho-MurNAc-pentapeptide from UDP-MurNAc-pentapeptide onto the lipid carrier undecaprenyl phosphate, yielding undecaprenyl-pyrophosphoryl-MurNAc-pentapeptide, known as lipid I.</text>
</comment>
<comment type="catalytic activity">
    <reaction evidence="1">
        <text>UDP-N-acetyl-alpha-D-muramoyl-L-alanyl-gamma-D-glutamyl-meso-2,6-diaminopimeloyl-D-alanyl-D-alanine + di-trans,octa-cis-undecaprenyl phosphate = di-trans,octa-cis-undecaprenyl diphospho-N-acetyl-alpha-D-muramoyl-L-alanyl-D-glutamyl-meso-2,6-diaminopimeloyl-D-alanyl-D-alanine + UMP</text>
        <dbReference type="Rhea" id="RHEA:28386"/>
        <dbReference type="ChEBI" id="CHEBI:57865"/>
        <dbReference type="ChEBI" id="CHEBI:60392"/>
        <dbReference type="ChEBI" id="CHEBI:61386"/>
        <dbReference type="ChEBI" id="CHEBI:61387"/>
        <dbReference type="EC" id="2.7.8.13"/>
    </reaction>
</comment>
<comment type="cofactor">
    <cofactor evidence="1">
        <name>Mg(2+)</name>
        <dbReference type="ChEBI" id="CHEBI:18420"/>
    </cofactor>
</comment>
<comment type="pathway">
    <text evidence="1">Cell wall biogenesis; peptidoglycan biosynthesis.</text>
</comment>
<comment type="subcellular location">
    <subcellularLocation>
        <location evidence="1">Cell inner membrane</location>
        <topology evidence="1">Multi-pass membrane protein</topology>
    </subcellularLocation>
</comment>
<comment type="similarity">
    <text evidence="1">Belongs to the glycosyltransferase 4 family. MraY subfamily.</text>
</comment>
<proteinExistence type="inferred from homology"/>
<protein>
    <recommendedName>
        <fullName evidence="1">Phospho-N-acetylmuramoyl-pentapeptide-transferase</fullName>
        <ecNumber evidence="1">2.7.8.13</ecNumber>
    </recommendedName>
    <alternativeName>
        <fullName evidence="1">UDP-MurNAc-pentapeptide phosphotransferase</fullName>
    </alternativeName>
</protein>
<reference key="1">
    <citation type="journal article" date="2007" name="Photosyn. Res.">
        <title>Complete nucleotide sequence of the freshwater unicellular cyanobacterium Synechococcus elongatus PCC 6301 chromosome: gene content and organization.</title>
        <authorList>
            <person name="Sugita C."/>
            <person name="Ogata K."/>
            <person name="Shikata M."/>
            <person name="Jikuya H."/>
            <person name="Takano J."/>
            <person name="Furumichi M."/>
            <person name="Kanehisa M."/>
            <person name="Omata T."/>
            <person name="Sugiura M."/>
            <person name="Sugita M."/>
        </authorList>
    </citation>
    <scope>NUCLEOTIDE SEQUENCE [LARGE SCALE GENOMIC DNA]</scope>
    <source>
        <strain>ATCC 27144 / PCC 6301 / SAUG 1402/1</strain>
    </source>
</reference>
<gene>
    <name evidence="1" type="primary">mraY</name>
    <name type="ordered locus">syc1353_d</name>
</gene>
<keyword id="KW-0131">Cell cycle</keyword>
<keyword id="KW-0132">Cell division</keyword>
<keyword id="KW-0997">Cell inner membrane</keyword>
<keyword id="KW-1003">Cell membrane</keyword>
<keyword id="KW-0133">Cell shape</keyword>
<keyword id="KW-0961">Cell wall biogenesis/degradation</keyword>
<keyword id="KW-0460">Magnesium</keyword>
<keyword id="KW-0472">Membrane</keyword>
<keyword id="KW-0479">Metal-binding</keyword>
<keyword id="KW-0573">Peptidoglycan synthesis</keyword>
<keyword id="KW-0808">Transferase</keyword>
<keyword id="KW-0812">Transmembrane</keyword>
<keyword id="KW-1133">Transmembrane helix</keyword>
<organism>
    <name type="scientific">Synechococcus sp. (strain ATCC 27144 / PCC 6301 / SAUG 1402/1)</name>
    <name type="common">Anacystis nidulans</name>
    <dbReference type="NCBI Taxonomy" id="269084"/>
    <lineage>
        <taxon>Bacteria</taxon>
        <taxon>Bacillati</taxon>
        <taxon>Cyanobacteriota</taxon>
        <taxon>Cyanophyceae</taxon>
        <taxon>Synechococcales</taxon>
        <taxon>Synechococcaceae</taxon>
        <taxon>Synechococcus</taxon>
    </lineage>
</organism>
<dbReference type="EC" id="2.7.8.13" evidence="1"/>
<dbReference type="EMBL" id="AP008231">
    <property type="protein sequence ID" value="BAD79543.1"/>
    <property type="molecule type" value="Genomic_DNA"/>
</dbReference>
<dbReference type="SMR" id="Q5N2C7"/>
<dbReference type="KEGG" id="syc:syc1353_d"/>
<dbReference type="eggNOG" id="COG0472">
    <property type="taxonomic scope" value="Bacteria"/>
</dbReference>
<dbReference type="UniPathway" id="UPA00219"/>
<dbReference type="Proteomes" id="UP000001175">
    <property type="component" value="Chromosome"/>
</dbReference>
<dbReference type="GO" id="GO:0005886">
    <property type="term" value="C:plasma membrane"/>
    <property type="evidence" value="ECO:0007669"/>
    <property type="project" value="UniProtKB-SubCell"/>
</dbReference>
<dbReference type="GO" id="GO:0046872">
    <property type="term" value="F:metal ion binding"/>
    <property type="evidence" value="ECO:0007669"/>
    <property type="project" value="UniProtKB-KW"/>
</dbReference>
<dbReference type="GO" id="GO:0008963">
    <property type="term" value="F:phospho-N-acetylmuramoyl-pentapeptide-transferase activity"/>
    <property type="evidence" value="ECO:0007669"/>
    <property type="project" value="UniProtKB-UniRule"/>
</dbReference>
<dbReference type="GO" id="GO:0051992">
    <property type="term" value="F:UDP-N-acetylmuramoyl-L-alanyl-D-glutamyl-meso-2,6-diaminopimelyl-D-alanyl-D-alanine:undecaprenyl-phosphate transferase activity"/>
    <property type="evidence" value="ECO:0007669"/>
    <property type="project" value="RHEA"/>
</dbReference>
<dbReference type="GO" id="GO:0051301">
    <property type="term" value="P:cell division"/>
    <property type="evidence" value="ECO:0007669"/>
    <property type="project" value="UniProtKB-KW"/>
</dbReference>
<dbReference type="GO" id="GO:0071555">
    <property type="term" value="P:cell wall organization"/>
    <property type="evidence" value="ECO:0007669"/>
    <property type="project" value="UniProtKB-KW"/>
</dbReference>
<dbReference type="GO" id="GO:0009252">
    <property type="term" value="P:peptidoglycan biosynthetic process"/>
    <property type="evidence" value="ECO:0007669"/>
    <property type="project" value="UniProtKB-UniRule"/>
</dbReference>
<dbReference type="GO" id="GO:0008360">
    <property type="term" value="P:regulation of cell shape"/>
    <property type="evidence" value="ECO:0007669"/>
    <property type="project" value="UniProtKB-KW"/>
</dbReference>
<dbReference type="CDD" id="cd06852">
    <property type="entry name" value="GT_MraY"/>
    <property type="match status" value="1"/>
</dbReference>
<dbReference type="HAMAP" id="MF_00038">
    <property type="entry name" value="MraY"/>
    <property type="match status" value="1"/>
</dbReference>
<dbReference type="InterPro" id="IPR000715">
    <property type="entry name" value="Glycosyl_transferase_4"/>
</dbReference>
<dbReference type="InterPro" id="IPR003524">
    <property type="entry name" value="PNAcMuramoyl-5peptid_Trfase"/>
</dbReference>
<dbReference type="InterPro" id="IPR018480">
    <property type="entry name" value="PNAcMuramoyl-5peptid_Trfase_CS"/>
</dbReference>
<dbReference type="NCBIfam" id="TIGR00445">
    <property type="entry name" value="mraY"/>
    <property type="match status" value="1"/>
</dbReference>
<dbReference type="PANTHER" id="PTHR22926">
    <property type="entry name" value="PHOSPHO-N-ACETYLMURAMOYL-PENTAPEPTIDE-TRANSFERASE"/>
    <property type="match status" value="1"/>
</dbReference>
<dbReference type="PANTHER" id="PTHR22926:SF5">
    <property type="entry name" value="PHOSPHO-N-ACETYLMURAMOYL-PENTAPEPTIDE-TRANSFERASE HOMOLOG"/>
    <property type="match status" value="1"/>
</dbReference>
<dbReference type="Pfam" id="PF00953">
    <property type="entry name" value="Glycos_transf_4"/>
    <property type="match status" value="1"/>
</dbReference>
<dbReference type="Pfam" id="PF10555">
    <property type="entry name" value="MraY_sig1"/>
    <property type="match status" value="1"/>
</dbReference>
<dbReference type="PROSITE" id="PS01348">
    <property type="entry name" value="MRAY_2"/>
    <property type="match status" value="1"/>
</dbReference>
<sequence length="368" mass="39438">MAPVSWGQALRNYKPTGQQLFFSLTALLAAAVWGRDRQLDIGLFSPQSQLLALGLGFSLAAIAGYWVVPLLRRIKAGQFIREDGPQSHLQKAGTPTMGGIFAIPAGLLPALILAGRSPLVWALAFVTLAYATIGWLDDWQILRHRNNKGISPKLKLCLQFGAAFLFCLWLISQQGWQGTITTITLPFGWSLALSLLFWPLAVFTLVSESNATNLTDGLDGLAGGTGAAVLAGLGLWLAPQDPAIATFCCSLAGGFLGFLLHNRNPARVFMGDTGSLALGGAIAAIAIVANCLWVLLVMGGLFVLESISVILQVSYYKATKGPDGKGKRLLRMAPWHHHLELGGWSETQVVASFYGLTLLLIASCWLLN</sequence>